<organism>
    <name type="scientific">Encephalitozoon cuniculi (strain GB-M1)</name>
    <name type="common">Microsporidian parasite</name>
    <dbReference type="NCBI Taxonomy" id="284813"/>
    <lineage>
        <taxon>Eukaryota</taxon>
        <taxon>Fungi</taxon>
        <taxon>Fungi incertae sedis</taxon>
        <taxon>Microsporidia</taxon>
        <taxon>Unikaryonidae</taxon>
        <taxon>Encephalitozoon</taxon>
    </lineage>
</organism>
<reference key="1">
    <citation type="journal article" date="2001" name="Nature">
        <title>Genome sequence and gene compaction of the eukaryote parasite Encephalitozoon cuniculi.</title>
        <authorList>
            <person name="Katinka M.D."/>
            <person name="Duprat S."/>
            <person name="Cornillot E."/>
            <person name="Metenier G."/>
            <person name="Thomarat F."/>
            <person name="Prensier G."/>
            <person name="Barbe V."/>
            <person name="Peyretaillade E."/>
            <person name="Brottier P."/>
            <person name="Wincker P."/>
            <person name="Delbac F."/>
            <person name="El Alaoui H."/>
            <person name="Peyret P."/>
            <person name="Saurin W."/>
            <person name="Gouy M."/>
            <person name="Weissenbach J."/>
            <person name="Vivares C.P."/>
        </authorList>
    </citation>
    <scope>NUCLEOTIDE SEQUENCE [LARGE SCALE GENOMIC DNA]</scope>
    <source>
        <strain>GB-M1</strain>
    </source>
</reference>
<reference key="2">
    <citation type="journal article" date="2006" name="Proteomics">
        <title>Proteomic analysis of the eukaryotic parasite Encephalitozoon cuniculi (microsporidia): a reference map for proteins expressed in late sporogonial stages.</title>
        <authorList>
            <person name="Brosson D."/>
            <person name="Kuhn L."/>
            <person name="Delbac F."/>
            <person name="Garin J."/>
            <person name="Vivares C.P."/>
            <person name="Texier C."/>
        </authorList>
    </citation>
    <scope>IDENTIFICATION BY MASS SPECTROMETRY [LARGE SCALE ANALYSIS]</scope>
    <scope>DEVELOPMENTAL STAGE</scope>
    <scope>SUBCELLULAR LOCATION</scope>
</reference>
<accession>Q8SV00</accession>
<name>Y792_ENCCU</name>
<sequence>MLLSLIFPIAVLGEKFDGYGPTAFDVSLSPDIPLGELTGYGKKHFKERENKGFGDLSLVDFNMETEDSFDRSKLVDIGWDLLDSSHGTVMTVQSIRKGEADALSMKVLGHYEVLNLSEGSSNVQEAPITYLPIVFDTLVLDHKKSGYIRDPENDKIIYASWAMFEHKKTKRWFTVVNVDMYSAYSEKTDVQMASILKDMSKEHTIDSNPVFFMGRINAVSDKLQKVIDDKYTNPLDVDRNAKEAPRFTMKNLPDILGNFQRDFVLVRDAASQMVRVNYARILRRGIPTLHYPIHAIVSFETGDKQLTPPAA</sequence>
<protein>
    <recommendedName>
        <fullName>Uncharacterized protein ECU07_0920</fullName>
    </recommendedName>
</protein>
<gene>
    <name type="ordered locus">ECU07_0920</name>
</gene>
<keyword id="KW-0325">Glycoprotein</keyword>
<keyword id="KW-1185">Reference proteome</keyword>
<keyword id="KW-0964">Secreted</keyword>
<keyword id="KW-0732">Signal</keyword>
<comment type="subcellular location">
    <subcellularLocation>
        <location evidence="3">Secreted</location>
    </subcellularLocation>
</comment>
<comment type="developmental stage">
    <text evidence="2">Expressed in late sporogonial stages.</text>
</comment>
<dbReference type="EMBL" id="AL590447">
    <property type="protein sequence ID" value="CAD25624.1"/>
    <property type="molecule type" value="Genomic_DNA"/>
</dbReference>
<dbReference type="RefSeq" id="NP_586020.1">
    <property type="nucleotide sequence ID" value="NM_001041642.1"/>
</dbReference>
<dbReference type="SMR" id="Q8SV00"/>
<dbReference type="STRING" id="284813.Q8SV00"/>
<dbReference type="GeneID" id="859450"/>
<dbReference type="KEGG" id="ecu:ECU07_0920"/>
<dbReference type="VEuPathDB" id="MicrosporidiaDB:ECU07_0920"/>
<dbReference type="HOGENOM" id="CLU_075869_0_0_1"/>
<dbReference type="InParanoid" id="Q8SV00"/>
<dbReference type="OMA" id="GHYENHE"/>
<dbReference type="OrthoDB" id="2190927at2759"/>
<dbReference type="Proteomes" id="UP000000819">
    <property type="component" value="Chromosome VII"/>
</dbReference>
<dbReference type="GO" id="GO:0005576">
    <property type="term" value="C:extracellular region"/>
    <property type="evidence" value="ECO:0007669"/>
    <property type="project" value="UniProtKB-SubCell"/>
</dbReference>
<dbReference type="Gene3D" id="3.60.10.10">
    <property type="entry name" value="Endonuclease/exonuclease/phosphatase"/>
    <property type="match status" value="1"/>
</dbReference>
<dbReference type="InterPro" id="IPR036691">
    <property type="entry name" value="Endo/exonu/phosph_ase_sf"/>
</dbReference>
<feature type="signal peptide" evidence="1">
    <location>
        <begin position="1"/>
        <end position="13"/>
    </location>
</feature>
<feature type="chain" id="PRO_0000383039" description="Uncharacterized protein ECU07_0920">
    <location>
        <begin position="14"/>
        <end position="311"/>
    </location>
</feature>
<feature type="glycosylation site" description="N-linked (GlcNAc...) asparagine" evidence="1">
    <location>
        <position position="115"/>
    </location>
</feature>
<evidence type="ECO:0000255" key="1"/>
<evidence type="ECO:0000269" key="2">
    <source>
    </source>
</evidence>
<evidence type="ECO:0000305" key="3"/>
<proteinExistence type="evidence at protein level"/>